<feature type="chain" id="PRO_0000422337" description="FERM, ARHGEF and pleckstrin domain-containing protein 1">
    <location>
        <begin position="1"/>
        <end position="1049"/>
    </location>
</feature>
<feature type="domain" description="FERM" evidence="5">
    <location>
        <begin position="40"/>
        <end position="320"/>
    </location>
</feature>
<feature type="domain" description="DH" evidence="4">
    <location>
        <begin position="543"/>
        <end position="734"/>
    </location>
</feature>
<feature type="domain" description="PH 1" evidence="6">
    <location>
        <begin position="763"/>
        <end position="860"/>
    </location>
</feature>
<feature type="domain" description="PH 2" evidence="6">
    <location>
        <begin position="936"/>
        <end position="1033"/>
    </location>
</feature>
<feature type="region of interest" description="Disordered" evidence="7">
    <location>
        <begin position="1"/>
        <end position="37"/>
    </location>
</feature>
<feature type="region of interest" description="Disordered" evidence="7">
    <location>
        <begin position="361"/>
        <end position="537"/>
    </location>
</feature>
<feature type="region of interest" description="Disordered" evidence="7">
    <location>
        <begin position="866"/>
        <end position="908"/>
    </location>
</feature>
<feature type="compositionally biased region" description="Polar residues" evidence="7">
    <location>
        <begin position="371"/>
        <end position="395"/>
    </location>
</feature>
<feature type="compositionally biased region" description="Polar residues" evidence="7">
    <location>
        <begin position="402"/>
        <end position="412"/>
    </location>
</feature>
<feature type="compositionally biased region" description="Low complexity" evidence="7">
    <location>
        <begin position="435"/>
        <end position="448"/>
    </location>
</feature>
<feature type="compositionally biased region" description="Polar residues" evidence="7">
    <location>
        <begin position="473"/>
        <end position="492"/>
    </location>
</feature>
<feature type="compositionally biased region" description="Polar residues" evidence="7">
    <location>
        <begin position="499"/>
        <end position="514"/>
    </location>
</feature>
<feature type="modified residue" description="Phosphoserine" evidence="9">
    <location>
        <position position="20"/>
    </location>
</feature>
<feature type="modified residue" description="Phosphoserine" evidence="2">
    <location>
        <position position="23"/>
    </location>
</feature>
<feature type="modified residue" description="Phosphothreonine" evidence="9">
    <location>
        <position position="24"/>
    </location>
</feature>
<feature type="modified residue" description="Phosphoserine" evidence="3">
    <location>
        <position position="340"/>
    </location>
</feature>
<feature type="modified residue" description="Phosphoserine" evidence="3">
    <location>
        <position position="373"/>
    </location>
</feature>
<feature type="modified residue" description="Phosphoserine" evidence="2">
    <location>
        <position position="389"/>
    </location>
</feature>
<feature type="modified residue" description="Phosphoserine" evidence="3">
    <location>
        <position position="403"/>
    </location>
</feature>
<feature type="modified residue" description="Phosphoserine" evidence="3">
    <location>
        <position position="427"/>
    </location>
</feature>
<feature type="modified residue" description="Phosphoserine" evidence="2">
    <location>
        <position position="433"/>
    </location>
</feature>
<feature type="modified residue" description="Phosphoserine" evidence="2">
    <location>
        <position position="437"/>
    </location>
</feature>
<feature type="modified residue" description="Phosphoserine" evidence="3">
    <location>
        <position position="513"/>
    </location>
</feature>
<feature type="modified residue" description="Phosphoserine" evidence="3">
    <location>
        <position position="517"/>
    </location>
</feature>
<feature type="modified residue" description="Phosphoserine" evidence="3">
    <location>
        <position position="837"/>
    </location>
</feature>
<feature type="modified residue" description="Phosphoserine" evidence="9">
    <location>
        <position position="876"/>
    </location>
</feature>
<feature type="modified residue" description="Phosphoserine" evidence="2">
    <location>
        <position position="882"/>
    </location>
</feature>
<feature type="modified residue" description="Phosphothreonine" evidence="3">
    <location>
        <position position="887"/>
    </location>
</feature>
<feature type="modified residue" description="Phosphoserine" evidence="9">
    <location>
        <position position="893"/>
    </location>
</feature>
<feature type="modified residue" description="Phosphoserine" evidence="2">
    <location>
        <position position="900"/>
    </location>
</feature>
<feature type="modified residue" description="Phosphoserine" evidence="2">
    <location>
        <position position="903"/>
    </location>
</feature>
<name>FARP1_RAT</name>
<evidence type="ECO:0000250" key="1"/>
<evidence type="ECO:0000250" key="2">
    <source>
        <dbReference type="UniProtKB" id="F8VPU2"/>
    </source>
</evidence>
<evidence type="ECO:0000250" key="3">
    <source>
        <dbReference type="UniProtKB" id="Q9Y4F1"/>
    </source>
</evidence>
<evidence type="ECO:0000255" key="4">
    <source>
        <dbReference type="PROSITE-ProRule" id="PRU00062"/>
    </source>
</evidence>
<evidence type="ECO:0000255" key="5">
    <source>
        <dbReference type="PROSITE-ProRule" id="PRU00084"/>
    </source>
</evidence>
<evidence type="ECO:0000255" key="6">
    <source>
        <dbReference type="PROSITE-ProRule" id="PRU00145"/>
    </source>
</evidence>
<evidence type="ECO:0000256" key="7">
    <source>
        <dbReference type="SAM" id="MobiDB-lite"/>
    </source>
</evidence>
<evidence type="ECO:0000269" key="8">
    <source>
    </source>
</evidence>
<evidence type="ECO:0007744" key="9">
    <source>
    </source>
</evidence>
<reference key="1">
    <citation type="journal article" date="2004" name="Nature">
        <title>Genome sequence of the Brown Norway rat yields insights into mammalian evolution.</title>
        <authorList>
            <person name="Gibbs R.A."/>
            <person name="Weinstock G.M."/>
            <person name="Metzker M.L."/>
            <person name="Muzny D.M."/>
            <person name="Sodergren E.J."/>
            <person name="Scherer S."/>
            <person name="Scott G."/>
            <person name="Steffen D."/>
            <person name="Worley K.C."/>
            <person name="Burch P.E."/>
            <person name="Okwuonu G."/>
            <person name="Hines S."/>
            <person name="Lewis L."/>
            <person name="Deramo C."/>
            <person name="Delgado O."/>
            <person name="Dugan-Rocha S."/>
            <person name="Miner G."/>
            <person name="Morgan M."/>
            <person name="Hawes A."/>
            <person name="Gill R."/>
            <person name="Holt R.A."/>
            <person name="Adams M.D."/>
            <person name="Amanatides P.G."/>
            <person name="Baden-Tillson H."/>
            <person name="Barnstead M."/>
            <person name="Chin S."/>
            <person name="Evans C.A."/>
            <person name="Ferriera S."/>
            <person name="Fosler C."/>
            <person name="Glodek A."/>
            <person name="Gu Z."/>
            <person name="Jennings D."/>
            <person name="Kraft C.L."/>
            <person name="Nguyen T."/>
            <person name="Pfannkoch C.M."/>
            <person name="Sitter C."/>
            <person name="Sutton G.G."/>
            <person name="Venter J.C."/>
            <person name="Woodage T."/>
            <person name="Smith D."/>
            <person name="Lee H.-M."/>
            <person name="Gustafson E."/>
            <person name="Cahill P."/>
            <person name="Kana A."/>
            <person name="Doucette-Stamm L."/>
            <person name="Weinstock K."/>
            <person name="Fechtel K."/>
            <person name="Weiss R.B."/>
            <person name="Dunn D.M."/>
            <person name="Green E.D."/>
            <person name="Blakesley R.W."/>
            <person name="Bouffard G.G."/>
            <person name="De Jong P.J."/>
            <person name="Osoegawa K."/>
            <person name="Zhu B."/>
            <person name="Marra M."/>
            <person name="Schein J."/>
            <person name="Bosdet I."/>
            <person name="Fjell C."/>
            <person name="Jones S."/>
            <person name="Krzywinski M."/>
            <person name="Mathewson C."/>
            <person name="Siddiqui A."/>
            <person name="Wye N."/>
            <person name="McPherson J."/>
            <person name="Zhao S."/>
            <person name="Fraser C.M."/>
            <person name="Shetty J."/>
            <person name="Shatsman S."/>
            <person name="Geer K."/>
            <person name="Chen Y."/>
            <person name="Abramzon S."/>
            <person name="Nierman W.C."/>
            <person name="Havlak P.H."/>
            <person name="Chen R."/>
            <person name="Durbin K.J."/>
            <person name="Egan A."/>
            <person name="Ren Y."/>
            <person name="Song X.-Z."/>
            <person name="Li B."/>
            <person name="Liu Y."/>
            <person name="Qin X."/>
            <person name="Cawley S."/>
            <person name="Cooney A.J."/>
            <person name="D'Souza L.M."/>
            <person name="Martin K."/>
            <person name="Wu J.Q."/>
            <person name="Gonzalez-Garay M.L."/>
            <person name="Jackson A.R."/>
            <person name="Kalafus K.J."/>
            <person name="McLeod M.P."/>
            <person name="Milosavljevic A."/>
            <person name="Virk D."/>
            <person name="Volkov A."/>
            <person name="Wheeler D.A."/>
            <person name="Zhang Z."/>
            <person name="Bailey J.A."/>
            <person name="Eichler E.E."/>
            <person name="Tuzun E."/>
            <person name="Birney E."/>
            <person name="Mongin E."/>
            <person name="Ureta-Vidal A."/>
            <person name="Woodwark C."/>
            <person name="Zdobnov E."/>
            <person name="Bork P."/>
            <person name="Suyama M."/>
            <person name="Torrents D."/>
            <person name="Alexandersson M."/>
            <person name="Trask B.J."/>
            <person name="Young J.M."/>
            <person name="Huang H."/>
            <person name="Wang H."/>
            <person name="Xing H."/>
            <person name="Daniels S."/>
            <person name="Gietzen D."/>
            <person name="Schmidt J."/>
            <person name="Stevens K."/>
            <person name="Vitt U."/>
            <person name="Wingrove J."/>
            <person name="Camara F."/>
            <person name="Mar Alba M."/>
            <person name="Abril J.F."/>
            <person name="Guigo R."/>
            <person name="Smit A."/>
            <person name="Dubchak I."/>
            <person name="Rubin E.M."/>
            <person name="Couronne O."/>
            <person name="Poliakov A."/>
            <person name="Huebner N."/>
            <person name="Ganten D."/>
            <person name="Goesele C."/>
            <person name="Hummel O."/>
            <person name="Kreitler T."/>
            <person name="Lee Y.-A."/>
            <person name="Monti J."/>
            <person name="Schulz H."/>
            <person name="Zimdahl H."/>
            <person name="Himmelbauer H."/>
            <person name="Lehrach H."/>
            <person name="Jacob H.J."/>
            <person name="Bromberg S."/>
            <person name="Gullings-Handley J."/>
            <person name="Jensen-Seaman M.I."/>
            <person name="Kwitek A.E."/>
            <person name="Lazar J."/>
            <person name="Pasko D."/>
            <person name="Tonellato P.J."/>
            <person name="Twigger S."/>
            <person name="Ponting C.P."/>
            <person name="Duarte J.M."/>
            <person name="Rice S."/>
            <person name="Goodstadt L."/>
            <person name="Beatson S.A."/>
            <person name="Emes R.D."/>
            <person name="Winter E.E."/>
            <person name="Webber C."/>
            <person name="Brandt P."/>
            <person name="Nyakatura G."/>
            <person name="Adetobi M."/>
            <person name="Chiaromonte F."/>
            <person name="Elnitski L."/>
            <person name="Eswara P."/>
            <person name="Hardison R.C."/>
            <person name="Hou M."/>
            <person name="Kolbe D."/>
            <person name="Makova K."/>
            <person name="Miller W."/>
            <person name="Nekrutenko A."/>
            <person name="Riemer C."/>
            <person name="Schwartz S."/>
            <person name="Taylor J."/>
            <person name="Yang S."/>
            <person name="Zhang Y."/>
            <person name="Lindpaintner K."/>
            <person name="Andrews T.D."/>
            <person name="Caccamo M."/>
            <person name="Clamp M."/>
            <person name="Clarke L."/>
            <person name="Curwen V."/>
            <person name="Durbin R.M."/>
            <person name="Eyras E."/>
            <person name="Searle S.M."/>
            <person name="Cooper G.M."/>
            <person name="Batzoglou S."/>
            <person name="Brudno M."/>
            <person name="Sidow A."/>
            <person name="Stone E.A."/>
            <person name="Payseur B.A."/>
            <person name="Bourque G."/>
            <person name="Lopez-Otin C."/>
            <person name="Puente X.S."/>
            <person name="Chakrabarti K."/>
            <person name="Chatterji S."/>
            <person name="Dewey C."/>
            <person name="Pachter L."/>
            <person name="Bray N."/>
            <person name="Yap V.B."/>
            <person name="Caspi A."/>
            <person name="Tesler G."/>
            <person name="Pevzner P.A."/>
            <person name="Haussler D."/>
            <person name="Roskin K.M."/>
            <person name="Baertsch R."/>
            <person name="Clawson H."/>
            <person name="Furey T.S."/>
            <person name="Hinrichs A.S."/>
            <person name="Karolchik D."/>
            <person name="Kent W.J."/>
            <person name="Rosenbloom K.R."/>
            <person name="Trumbower H."/>
            <person name="Weirauch M."/>
            <person name="Cooper D.N."/>
            <person name="Stenson P.D."/>
            <person name="Ma B."/>
            <person name="Brent M."/>
            <person name="Arumugam M."/>
            <person name="Shteynberg D."/>
            <person name="Copley R.R."/>
            <person name="Taylor M.S."/>
            <person name="Riethman H."/>
            <person name="Mudunuri U."/>
            <person name="Peterson J."/>
            <person name="Guyer M."/>
            <person name="Felsenfeld A."/>
            <person name="Old S."/>
            <person name="Mockrin S."/>
            <person name="Collins F.S."/>
        </authorList>
    </citation>
    <scope>NUCLEOTIDE SEQUENCE [LARGE SCALE GENOMIC DNA]</scope>
    <source>
        <strain>Brown Norway</strain>
    </source>
</reference>
<reference key="2">
    <citation type="submission" date="2005-07" db="EMBL/GenBank/DDBJ databases">
        <authorList>
            <person name="Mural R.J."/>
            <person name="Adams M.D."/>
            <person name="Myers E.W."/>
            <person name="Smith H.O."/>
            <person name="Venter J.C."/>
        </authorList>
    </citation>
    <scope>NUCLEOTIDE SEQUENCE [LARGE SCALE GENOMIC DNA]</scope>
    <source>
        <strain>Brown Norway</strain>
    </source>
</reference>
<reference key="3">
    <citation type="journal article" date="2012" name="J. Cell Biol.">
        <title>The novel synaptogenic protein Farp1 links postsynaptic cytoskeletal dynamics and transsynaptic organization.</title>
        <authorList>
            <person name="Cheadle L."/>
            <person name="Biederer T."/>
        </authorList>
    </citation>
    <scope>FUNCTION</scope>
    <scope>SUBCELLULAR LOCATION</scope>
    <scope>INTERACTION WITH CADM1 AND RAC1</scope>
    <scope>DEVELOPMENTAL STAGE</scope>
    <scope>TISSUE SPECIFICITY</scope>
</reference>
<reference key="4">
    <citation type="journal article" date="2012" name="Nat. Commun.">
        <title>Quantitative maps of protein phosphorylation sites across 14 different rat organs and tissues.</title>
        <authorList>
            <person name="Lundby A."/>
            <person name="Secher A."/>
            <person name="Lage K."/>
            <person name="Nordsborg N.B."/>
            <person name="Dmytriyev A."/>
            <person name="Lundby C."/>
            <person name="Olsen J.V."/>
        </authorList>
    </citation>
    <scope>PHOSPHORYLATION [LARGE SCALE ANALYSIS] AT SER-20; THR-24; SER-876 AND SER-893</scope>
    <scope>IDENTIFICATION BY MASS SPECTROMETRY [LARGE SCALE ANALYSIS]</scope>
</reference>
<protein>
    <recommendedName>
        <fullName>FERM, ARHGEF and pleckstrin domain-containing protein 1</fullName>
    </recommendedName>
    <alternativeName>
        <fullName>FERM, RhoGEF and pleckstrin domain-containing protein 1</fullName>
    </alternativeName>
</protein>
<proteinExistence type="evidence at protein level"/>
<keyword id="KW-1003">Cell membrane</keyword>
<keyword id="KW-0966">Cell projection</keyword>
<keyword id="KW-0963">Cytoplasm</keyword>
<keyword id="KW-0217">Developmental protein</keyword>
<keyword id="KW-0344">Guanine-nucleotide releasing factor</keyword>
<keyword id="KW-0472">Membrane</keyword>
<keyword id="KW-0597">Phosphoprotein</keyword>
<keyword id="KW-1185">Reference proteome</keyword>
<keyword id="KW-0677">Repeat</keyword>
<keyword id="KW-0770">Synapse</keyword>
<keyword id="KW-0771">Synaptosome</keyword>
<accession>F1LYQ8</accession>
<comment type="function">
    <text evidence="1 8">May play a role in semaphorin signaling (By similarity). Functions as a guanine nucleotide exchange factor for RAC1. Plays a role in the assembly and disassembly of dendritic filopodia, the formation of dendritic spines, regulation of dendrite length and ultimately the formation of synapses.</text>
</comment>
<comment type="subunit">
    <text evidence="8">Interacts with CADM1. Interacts with RAC1.</text>
</comment>
<comment type="subcellular location">
    <subcellularLocation>
        <location evidence="8">Cell membrane</location>
        <topology evidence="8">Peripheral membrane protein</topology>
        <orientation evidence="8">Cytoplasmic side</orientation>
    </subcellularLocation>
    <subcellularLocation>
        <location evidence="1">Synapse</location>
    </subcellularLocation>
    <subcellularLocation>
        <location evidence="8">Synapse</location>
        <location evidence="8">Synaptosome</location>
    </subcellularLocation>
    <subcellularLocation>
        <location evidence="8">Cytoplasm</location>
        <location evidence="8">Cytosol</location>
    </subcellularLocation>
    <subcellularLocation>
        <location evidence="8">Cell projection</location>
        <location evidence="8">Filopodium</location>
    </subcellularLocation>
    <subcellularLocation>
        <location evidence="8">Cell projection</location>
        <location evidence="8">Dendrite</location>
    </subcellularLocation>
    <subcellularLocation>
        <location evidence="8">Cell projection</location>
        <location evidence="8">Dendritic spine</location>
    </subcellularLocation>
    <text>Recruited to the cell membrane via interaction with CADM1.</text>
</comment>
<comment type="tissue specificity">
    <text evidence="8">Detected in forbrain (at protein level).</text>
</comment>
<comment type="developmental stage">
    <text evidence="8">Highly expressed in forebrain during the first 15 days after birth, a period of intense synaptogenesis.</text>
</comment>
<comment type="domain">
    <text evidence="1">Intramolecular interaction between the DH domain and the PH domains can stabilize the protein in an autoinhibited conformation.</text>
</comment>
<dbReference type="EMBL" id="AABR06085873">
    <property type="status" value="NOT_ANNOTATED_CDS"/>
    <property type="molecule type" value="Genomic_DNA"/>
</dbReference>
<dbReference type="EMBL" id="AABR06085874">
    <property type="status" value="NOT_ANNOTATED_CDS"/>
    <property type="molecule type" value="Genomic_DNA"/>
</dbReference>
<dbReference type="EMBL" id="AABR06085875">
    <property type="status" value="NOT_ANNOTATED_CDS"/>
    <property type="molecule type" value="Genomic_DNA"/>
</dbReference>
<dbReference type="EMBL" id="AABR06085876">
    <property type="status" value="NOT_ANNOTATED_CDS"/>
    <property type="molecule type" value="Genomic_DNA"/>
</dbReference>
<dbReference type="EMBL" id="AABR06085877">
    <property type="status" value="NOT_ANNOTATED_CDS"/>
    <property type="molecule type" value="Genomic_DNA"/>
</dbReference>
<dbReference type="EMBL" id="AABR06085878">
    <property type="status" value="NOT_ANNOTATED_CDS"/>
    <property type="molecule type" value="Genomic_DNA"/>
</dbReference>
<dbReference type="EMBL" id="AABR06085879">
    <property type="status" value="NOT_ANNOTATED_CDS"/>
    <property type="molecule type" value="Genomic_DNA"/>
</dbReference>
<dbReference type="EMBL" id="AABR06085880">
    <property type="status" value="NOT_ANNOTATED_CDS"/>
    <property type="molecule type" value="Genomic_DNA"/>
</dbReference>
<dbReference type="EMBL" id="CH473951">
    <property type="protein sequence ID" value="EDM02559.1"/>
    <property type="molecule type" value="Genomic_DNA"/>
</dbReference>
<dbReference type="RefSeq" id="NP_001100757.1">
    <property type="nucleotide sequence ID" value="NM_001107287.1"/>
</dbReference>
<dbReference type="RefSeq" id="XP_006252534.1">
    <property type="nucleotide sequence ID" value="XM_006252472.5"/>
</dbReference>
<dbReference type="RefSeq" id="XP_006252535.1">
    <property type="nucleotide sequence ID" value="XM_006252473.3"/>
</dbReference>
<dbReference type="RefSeq" id="XP_017455209.1">
    <property type="nucleotide sequence ID" value="XM_017599720.3"/>
</dbReference>
<dbReference type="SMR" id="F1LYQ8"/>
<dbReference type="FunCoup" id="F1LYQ8">
    <property type="interactions" value="1270"/>
</dbReference>
<dbReference type="STRING" id="10116.ENSRNOP00000015271"/>
<dbReference type="CarbonylDB" id="F1LYQ8"/>
<dbReference type="GlyGen" id="F1LYQ8">
    <property type="glycosylation" value="2 sites"/>
</dbReference>
<dbReference type="iPTMnet" id="F1LYQ8"/>
<dbReference type="PhosphoSitePlus" id="F1LYQ8"/>
<dbReference type="PaxDb" id="10116-ENSRNOP00000015271"/>
<dbReference type="PeptideAtlas" id="F1LYQ8"/>
<dbReference type="Ensembl" id="ENSRNOT00000015271.7">
    <property type="protein sequence ID" value="ENSRNOP00000015271.5"/>
    <property type="gene ID" value="ENSRNOG00000011203.7"/>
</dbReference>
<dbReference type="GeneID" id="306183"/>
<dbReference type="KEGG" id="rno:306183"/>
<dbReference type="AGR" id="RGD:1305346"/>
<dbReference type="CTD" id="10160"/>
<dbReference type="RGD" id="1305346">
    <property type="gene designation" value="Farp1"/>
</dbReference>
<dbReference type="eggNOG" id="KOG3531">
    <property type="taxonomic scope" value="Eukaryota"/>
</dbReference>
<dbReference type="GeneTree" id="ENSGT00940000155318"/>
<dbReference type="HOGENOM" id="CLU_012301_0_0_1"/>
<dbReference type="InParanoid" id="F1LYQ8"/>
<dbReference type="OMA" id="PHCLTLC"/>
<dbReference type="OrthoDB" id="9990815at2759"/>
<dbReference type="TreeFam" id="TF351276"/>
<dbReference type="Reactome" id="R-RNO-8980692">
    <property type="pathway name" value="RHOA GTPase cycle"/>
</dbReference>
<dbReference type="Reactome" id="R-RNO-9013148">
    <property type="pathway name" value="CDC42 GTPase cycle"/>
</dbReference>
<dbReference type="Reactome" id="R-RNO-9013149">
    <property type="pathway name" value="RAC1 GTPase cycle"/>
</dbReference>
<dbReference type="Reactome" id="R-RNO-9035034">
    <property type="pathway name" value="RHOF GTPase cycle"/>
</dbReference>
<dbReference type="PRO" id="PR:F1LYQ8"/>
<dbReference type="Proteomes" id="UP000002494">
    <property type="component" value="Chromosome 15"/>
</dbReference>
<dbReference type="Proteomes" id="UP000234681">
    <property type="component" value="Chromosome 15"/>
</dbReference>
<dbReference type="Bgee" id="ENSRNOG00000011203">
    <property type="expression patterns" value="Expressed in lung and 19 other cell types or tissues"/>
</dbReference>
<dbReference type="GO" id="GO:0009898">
    <property type="term" value="C:cytoplasmic side of plasma membrane"/>
    <property type="evidence" value="ECO:0000314"/>
    <property type="project" value="UniProtKB"/>
</dbReference>
<dbReference type="GO" id="GO:0005856">
    <property type="term" value="C:cytoskeleton"/>
    <property type="evidence" value="ECO:0007669"/>
    <property type="project" value="InterPro"/>
</dbReference>
<dbReference type="GO" id="GO:0005829">
    <property type="term" value="C:cytosol"/>
    <property type="evidence" value="ECO:0000314"/>
    <property type="project" value="UniProtKB"/>
</dbReference>
<dbReference type="GO" id="GO:0030425">
    <property type="term" value="C:dendrite"/>
    <property type="evidence" value="ECO:0000314"/>
    <property type="project" value="UniProtKB"/>
</dbReference>
<dbReference type="GO" id="GO:0043197">
    <property type="term" value="C:dendritic spine"/>
    <property type="evidence" value="ECO:0007669"/>
    <property type="project" value="UniProtKB-SubCell"/>
</dbReference>
<dbReference type="GO" id="GO:0098890">
    <property type="term" value="C:extrinsic component of postsynaptic membrane"/>
    <property type="evidence" value="ECO:0000314"/>
    <property type="project" value="SynGO"/>
</dbReference>
<dbReference type="GO" id="GO:0030175">
    <property type="term" value="C:filopodium"/>
    <property type="evidence" value="ECO:0007669"/>
    <property type="project" value="UniProtKB-SubCell"/>
</dbReference>
<dbReference type="GO" id="GO:0098978">
    <property type="term" value="C:glutamatergic synapse"/>
    <property type="evidence" value="ECO:0000314"/>
    <property type="project" value="SynGO"/>
</dbReference>
<dbReference type="GO" id="GO:0008092">
    <property type="term" value="F:cytoskeletal protein binding"/>
    <property type="evidence" value="ECO:0007669"/>
    <property type="project" value="InterPro"/>
</dbReference>
<dbReference type="GO" id="GO:0005085">
    <property type="term" value="F:guanyl-nucleotide exchange factor activity"/>
    <property type="evidence" value="ECO:0000315"/>
    <property type="project" value="UniProtKB"/>
</dbReference>
<dbReference type="GO" id="GO:0031267">
    <property type="term" value="F:small GTPase binding"/>
    <property type="evidence" value="ECO:0000353"/>
    <property type="project" value="UniProtKB"/>
</dbReference>
<dbReference type="GO" id="GO:0048813">
    <property type="term" value="P:dendrite morphogenesis"/>
    <property type="evidence" value="ECO:0000315"/>
    <property type="project" value="UniProtKB"/>
</dbReference>
<dbReference type="GO" id="GO:0007167">
    <property type="term" value="P:enzyme-linked receptor protein signaling pathway"/>
    <property type="evidence" value="ECO:0000266"/>
    <property type="project" value="RGD"/>
</dbReference>
<dbReference type="GO" id="GO:1904395">
    <property type="term" value="P:positive regulation of skeletal muscle acetylcholine-gated channel clustering"/>
    <property type="evidence" value="ECO:0000266"/>
    <property type="project" value="RGD"/>
</dbReference>
<dbReference type="GO" id="GO:0098974">
    <property type="term" value="P:postsynaptic actin cytoskeleton organization"/>
    <property type="evidence" value="ECO:0000314"/>
    <property type="project" value="SynGO"/>
</dbReference>
<dbReference type="GO" id="GO:0016601">
    <property type="term" value="P:Rac protein signal transduction"/>
    <property type="evidence" value="ECO:0000266"/>
    <property type="project" value="RGD"/>
</dbReference>
<dbReference type="GO" id="GO:1905606">
    <property type="term" value="P:regulation of presynapse assembly"/>
    <property type="evidence" value="ECO:0000314"/>
    <property type="project" value="SynGO"/>
</dbReference>
<dbReference type="GO" id="GO:0098942">
    <property type="term" value="P:retrograde trans-synaptic signaling by trans-synaptic protein complex"/>
    <property type="evidence" value="ECO:0000314"/>
    <property type="project" value="SynGO"/>
</dbReference>
<dbReference type="GO" id="GO:0007416">
    <property type="term" value="P:synapse assembly"/>
    <property type="evidence" value="ECO:0000315"/>
    <property type="project" value="UniProtKB"/>
</dbReference>
<dbReference type="CDD" id="cd14473">
    <property type="entry name" value="FERM_B-lobe"/>
    <property type="match status" value="1"/>
</dbReference>
<dbReference type="CDD" id="cd13193">
    <property type="entry name" value="FERM_C_FARP1-like"/>
    <property type="match status" value="1"/>
</dbReference>
<dbReference type="CDD" id="cd17189">
    <property type="entry name" value="FERM_F1_FARP1"/>
    <property type="match status" value="1"/>
</dbReference>
<dbReference type="CDD" id="cd01220">
    <property type="entry name" value="PH1_FARP1-like"/>
    <property type="match status" value="1"/>
</dbReference>
<dbReference type="CDD" id="cd13235">
    <property type="entry name" value="PH2_FARP1-like"/>
    <property type="match status" value="1"/>
</dbReference>
<dbReference type="CDD" id="cd00160">
    <property type="entry name" value="RhoGEF"/>
    <property type="match status" value="1"/>
</dbReference>
<dbReference type="FunFam" id="2.30.29.30:FF:000002">
    <property type="entry name" value="Band 4.1-like protein 5 isoform 1"/>
    <property type="match status" value="1"/>
</dbReference>
<dbReference type="FunFam" id="3.10.20.90:FF:000040">
    <property type="entry name" value="FERM, RhoGEF and pleckstrin domain-containing protein"/>
    <property type="match status" value="1"/>
</dbReference>
<dbReference type="FunFam" id="1.20.80.10:FF:000005">
    <property type="entry name" value="FERM, RhoGEF and pleckstrin domain-containing protein 1"/>
    <property type="match status" value="1"/>
</dbReference>
<dbReference type="FunFam" id="1.20.900.10:FF:000021">
    <property type="entry name" value="FERM, RhoGEF and pleckstrin domain-containing protein 1"/>
    <property type="match status" value="1"/>
</dbReference>
<dbReference type="FunFam" id="2.30.29.30:FF:000046">
    <property type="entry name" value="FERM, RhoGEF and pleckstrin domain-containing protein 1"/>
    <property type="match status" value="1"/>
</dbReference>
<dbReference type="Gene3D" id="1.20.80.10">
    <property type="match status" value="1"/>
</dbReference>
<dbReference type="Gene3D" id="1.20.900.10">
    <property type="entry name" value="Dbl homology (DH) domain"/>
    <property type="match status" value="1"/>
</dbReference>
<dbReference type="Gene3D" id="3.10.20.90">
    <property type="entry name" value="Phosphatidylinositol 3-kinase Catalytic Subunit, Chain A, domain 1"/>
    <property type="match status" value="1"/>
</dbReference>
<dbReference type="Gene3D" id="2.30.29.30">
    <property type="entry name" value="Pleckstrin-homology domain (PH domain)/Phosphotyrosine-binding domain (PTB)"/>
    <property type="match status" value="3"/>
</dbReference>
<dbReference type="InterPro" id="IPR019749">
    <property type="entry name" value="Band_41_domain"/>
</dbReference>
<dbReference type="InterPro" id="IPR035899">
    <property type="entry name" value="DBL_dom_sf"/>
</dbReference>
<dbReference type="InterPro" id="IPR000219">
    <property type="entry name" value="DH_dom"/>
</dbReference>
<dbReference type="InterPro" id="IPR000798">
    <property type="entry name" value="Ez/rad/moesin-like"/>
</dbReference>
<dbReference type="InterPro" id="IPR014847">
    <property type="entry name" value="FA"/>
</dbReference>
<dbReference type="InterPro" id="IPR041788">
    <property type="entry name" value="FARP1/FARP2/FRMD7_FERM_C"/>
</dbReference>
<dbReference type="InterPro" id="IPR014352">
    <property type="entry name" value="FERM/acyl-CoA-bd_prot_sf"/>
</dbReference>
<dbReference type="InterPro" id="IPR035963">
    <property type="entry name" value="FERM_2"/>
</dbReference>
<dbReference type="InterPro" id="IPR019748">
    <property type="entry name" value="FERM_central"/>
</dbReference>
<dbReference type="InterPro" id="IPR019747">
    <property type="entry name" value="FERM_CS"/>
</dbReference>
<dbReference type="InterPro" id="IPR000299">
    <property type="entry name" value="FERM_domain"/>
</dbReference>
<dbReference type="InterPro" id="IPR018979">
    <property type="entry name" value="FERM_N"/>
</dbReference>
<dbReference type="InterPro" id="IPR018980">
    <property type="entry name" value="FERM_PH-like_C"/>
</dbReference>
<dbReference type="InterPro" id="IPR011993">
    <property type="entry name" value="PH-like_dom_sf"/>
</dbReference>
<dbReference type="InterPro" id="IPR001849">
    <property type="entry name" value="PH_domain"/>
</dbReference>
<dbReference type="InterPro" id="IPR051835">
    <property type="entry name" value="RAC1-GEF"/>
</dbReference>
<dbReference type="InterPro" id="IPR029071">
    <property type="entry name" value="Ubiquitin-like_domsf"/>
</dbReference>
<dbReference type="PANTHER" id="PTHR45858">
    <property type="entry name" value="FERM DOMAIN CONTAINING PROTEIN"/>
    <property type="match status" value="1"/>
</dbReference>
<dbReference type="PANTHER" id="PTHR45858:SF2">
    <property type="entry name" value="FERM, ARHGEF AND PLECKSTRIN DOMAIN-CONTAINING PROTEIN 1"/>
    <property type="match status" value="1"/>
</dbReference>
<dbReference type="Pfam" id="PF08736">
    <property type="entry name" value="FA"/>
    <property type="match status" value="1"/>
</dbReference>
<dbReference type="Pfam" id="PF09380">
    <property type="entry name" value="FERM_C"/>
    <property type="match status" value="1"/>
</dbReference>
<dbReference type="Pfam" id="PF00373">
    <property type="entry name" value="FERM_M"/>
    <property type="match status" value="1"/>
</dbReference>
<dbReference type="Pfam" id="PF09379">
    <property type="entry name" value="FERM_N"/>
    <property type="match status" value="1"/>
</dbReference>
<dbReference type="Pfam" id="PF00169">
    <property type="entry name" value="PH"/>
    <property type="match status" value="2"/>
</dbReference>
<dbReference type="Pfam" id="PF00621">
    <property type="entry name" value="RhoGEF"/>
    <property type="match status" value="1"/>
</dbReference>
<dbReference type="PRINTS" id="PR00935">
    <property type="entry name" value="BAND41"/>
</dbReference>
<dbReference type="PRINTS" id="PR00661">
    <property type="entry name" value="ERMFAMILY"/>
</dbReference>
<dbReference type="SMART" id="SM00295">
    <property type="entry name" value="B41"/>
    <property type="match status" value="1"/>
</dbReference>
<dbReference type="SMART" id="SM01195">
    <property type="entry name" value="FA"/>
    <property type="match status" value="1"/>
</dbReference>
<dbReference type="SMART" id="SM01196">
    <property type="entry name" value="FERM_C"/>
    <property type="match status" value="1"/>
</dbReference>
<dbReference type="SMART" id="SM00233">
    <property type="entry name" value="PH"/>
    <property type="match status" value="2"/>
</dbReference>
<dbReference type="SMART" id="SM00325">
    <property type="entry name" value="RhoGEF"/>
    <property type="match status" value="1"/>
</dbReference>
<dbReference type="SUPFAM" id="SSF48065">
    <property type="entry name" value="DBL homology domain (DH-domain)"/>
    <property type="match status" value="1"/>
</dbReference>
<dbReference type="SUPFAM" id="SSF50729">
    <property type="entry name" value="PH domain-like"/>
    <property type="match status" value="3"/>
</dbReference>
<dbReference type="SUPFAM" id="SSF47031">
    <property type="entry name" value="Second domain of FERM"/>
    <property type="match status" value="1"/>
</dbReference>
<dbReference type="SUPFAM" id="SSF54236">
    <property type="entry name" value="Ubiquitin-like"/>
    <property type="match status" value="1"/>
</dbReference>
<dbReference type="PROSITE" id="PS50010">
    <property type="entry name" value="DH_2"/>
    <property type="match status" value="1"/>
</dbReference>
<dbReference type="PROSITE" id="PS00660">
    <property type="entry name" value="FERM_1"/>
    <property type="match status" value="1"/>
</dbReference>
<dbReference type="PROSITE" id="PS50057">
    <property type="entry name" value="FERM_3"/>
    <property type="match status" value="1"/>
</dbReference>
<dbReference type="PROSITE" id="PS50003">
    <property type="entry name" value="PH_DOMAIN"/>
    <property type="match status" value="2"/>
</dbReference>
<gene>
    <name type="primary">Farp1</name>
</gene>
<sequence length="1049" mass="118842">MGEIEQKPTPASRLGAPENSGISTLERGQKPPPTPSGKLMTVKIQMLDDTQEAFEVPQRAPGKVLFDAVCNHLNLVEGDYFGLEFPDHRKIVVWLDLLKPIVKQIRRPKHVLVKFVVKFFPPDHTQLQEELTRYLFALQVKQDLAQGRLTCNDTSAALLISHIVQSEIGDFDEALDREHLAKNKYVPQQDALEDKIVEFHHSHIGQTPAESDFQLLEVARRLEMYGIRLHPAKDREGTKINLAVANTGILVFQGFTKINAFNWAKVRKLSFKRKRFLIKLRPDVNSSYQDTLEFLMAGRDFCKSFWKICVEHHAFFRLFEEPKPKPKPVLFSRGSSFRFSGRTQKQVLDYVKEGGHKKVQFERKHSKIHSTRSLVSQPTAPNSEVPKQSPQSASLTFGEGTESPSAQSCQQAKETKVCTLEPGPRQSPALSKSPSGSKAADGTAAAAPPEEEDEEEGGKDGIRPSNPQPPQPSTGSLTGSPHLSELSINSQGGAAPANVTLSPNLSPDNKQASPLISPLLNDQACPRTDDEEEGRRKRFPTDKAYYIAKEVSTTERTYLKDLEVIASWFQSTVSKEDSMPEALKSLIFPNFEPLHKFHTNFLKEIEQRLALWEGRSNAHIRGDYQRIGDVMLKNIQGMKHLAAHLWKHSEALEALETSIKGSRRLEHFCRDFELQKVCYLPLNTFLLRPLHRLMHYKQVLERLCKHHPPNHADFRDCRAALAEITEMVAQLHGTMIKMENFQKLHELKKDLIGIDNLVIPGREFIRLGSLSKLSGKGLQQRMFFLFNDVLLYTSRGLTASNQFKVHGQLPLYGMTIEESEEEWGVPHCLTLRGQRQSIIVAASSRSEMEKWLEDIQMAIDLAEKSNGPTPELLASSPPDNKSPDEATAADQESEDDLSASRTSLERQAPHRGNTMVHVCWHRSTSVSMVDFSIAVENQLSGNLLRKFKNSNGWQKLWVVFTNFCLFFYKSHQDSHPLASLPLLGYSLTIPSESENIHKDYVFKLHFKSHVYYFRAESEYTFERWMEVIRSATSSASRAHSLSHKESHLY</sequence>
<organism>
    <name type="scientific">Rattus norvegicus</name>
    <name type="common">Rat</name>
    <dbReference type="NCBI Taxonomy" id="10116"/>
    <lineage>
        <taxon>Eukaryota</taxon>
        <taxon>Metazoa</taxon>
        <taxon>Chordata</taxon>
        <taxon>Craniata</taxon>
        <taxon>Vertebrata</taxon>
        <taxon>Euteleostomi</taxon>
        <taxon>Mammalia</taxon>
        <taxon>Eutheria</taxon>
        <taxon>Euarchontoglires</taxon>
        <taxon>Glires</taxon>
        <taxon>Rodentia</taxon>
        <taxon>Myomorpha</taxon>
        <taxon>Muroidea</taxon>
        <taxon>Muridae</taxon>
        <taxon>Murinae</taxon>
        <taxon>Rattus</taxon>
    </lineage>
</organism>